<evidence type="ECO:0000255" key="1">
    <source>
        <dbReference type="HAMAP-Rule" id="MF_00060"/>
    </source>
</evidence>
<accession>Q3IDD3</accession>
<name>SURE_PSET1</name>
<reference key="1">
    <citation type="journal article" date="2005" name="Genome Res.">
        <title>Coping with cold: the genome of the versatile marine Antarctica bacterium Pseudoalteromonas haloplanktis TAC125.</title>
        <authorList>
            <person name="Medigue C."/>
            <person name="Krin E."/>
            <person name="Pascal G."/>
            <person name="Barbe V."/>
            <person name="Bernsel A."/>
            <person name="Bertin P.N."/>
            <person name="Cheung F."/>
            <person name="Cruveiller S."/>
            <person name="D'Amico S."/>
            <person name="Duilio A."/>
            <person name="Fang G."/>
            <person name="Feller G."/>
            <person name="Ho C."/>
            <person name="Mangenot S."/>
            <person name="Marino G."/>
            <person name="Nilsson J."/>
            <person name="Parrilli E."/>
            <person name="Rocha E.P.C."/>
            <person name="Rouy Z."/>
            <person name="Sekowska A."/>
            <person name="Tutino M.L."/>
            <person name="Vallenet D."/>
            <person name="von Heijne G."/>
            <person name="Danchin A."/>
        </authorList>
    </citation>
    <scope>NUCLEOTIDE SEQUENCE [LARGE SCALE GENOMIC DNA]</scope>
    <source>
        <strain>TAC 125</strain>
    </source>
</reference>
<keyword id="KW-0963">Cytoplasm</keyword>
<keyword id="KW-0378">Hydrolase</keyword>
<keyword id="KW-0479">Metal-binding</keyword>
<keyword id="KW-0547">Nucleotide-binding</keyword>
<keyword id="KW-1185">Reference proteome</keyword>
<organism>
    <name type="scientific">Pseudoalteromonas translucida (strain TAC 125)</name>
    <dbReference type="NCBI Taxonomy" id="326442"/>
    <lineage>
        <taxon>Bacteria</taxon>
        <taxon>Pseudomonadati</taxon>
        <taxon>Pseudomonadota</taxon>
        <taxon>Gammaproteobacteria</taxon>
        <taxon>Alteromonadales</taxon>
        <taxon>Pseudoalteromonadaceae</taxon>
        <taxon>Pseudoalteromonas</taxon>
    </lineage>
</organism>
<proteinExistence type="inferred from homology"/>
<protein>
    <recommendedName>
        <fullName evidence="1">5'-nucleotidase SurE</fullName>
        <ecNumber evidence="1">3.1.3.5</ecNumber>
    </recommendedName>
    <alternativeName>
        <fullName evidence="1">Nucleoside 5'-monophosphate phosphohydrolase</fullName>
    </alternativeName>
</protein>
<dbReference type="EC" id="3.1.3.5" evidence="1"/>
<dbReference type="EMBL" id="CR954246">
    <property type="protein sequence ID" value="CAI85771.1"/>
    <property type="molecule type" value="Genomic_DNA"/>
</dbReference>
<dbReference type="SMR" id="Q3IDD3"/>
<dbReference type="STRING" id="326442.PSHAa0687"/>
<dbReference type="KEGG" id="pha:PSHAa0687"/>
<dbReference type="eggNOG" id="COG0496">
    <property type="taxonomic scope" value="Bacteria"/>
</dbReference>
<dbReference type="HOGENOM" id="CLU_045192_1_2_6"/>
<dbReference type="BioCyc" id="PHAL326442:PSHA_RS03360-MONOMER"/>
<dbReference type="Proteomes" id="UP000006843">
    <property type="component" value="Chromosome I"/>
</dbReference>
<dbReference type="GO" id="GO:0005737">
    <property type="term" value="C:cytoplasm"/>
    <property type="evidence" value="ECO:0007669"/>
    <property type="project" value="UniProtKB-SubCell"/>
</dbReference>
<dbReference type="GO" id="GO:0008254">
    <property type="term" value="F:3'-nucleotidase activity"/>
    <property type="evidence" value="ECO:0007669"/>
    <property type="project" value="TreeGrafter"/>
</dbReference>
<dbReference type="GO" id="GO:0008253">
    <property type="term" value="F:5'-nucleotidase activity"/>
    <property type="evidence" value="ECO:0007669"/>
    <property type="project" value="UniProtKB-UniRule"/>
</dbReference>
<dbReference type="GO" id="GO:0004309">
    <property type="term" value="F:exopolyphosphatase activity"/>
    <property type="evidence" value="ECO:0007669"/>
    <property type="project" value="TreeGrafter"/>
</dbReference>
<dbReference type="GO" id="GO:0046872">
    <property type="term" value="F:metal ion binding"/>
    <property type="evidence" value="ECO:0007669"/>
    <property type="project" value="UniProtKB-UniRule"/>
</dbReference>
<dbReference type="GO" id="GO:0000166">
    <property type="term" value="F:nucleotide binding"/>
    <property type="evidence" value="ECO:0007669"/>
    <property type="project" value="UniProtKB-KW"/>
</dbReference>
<dbReference type="FunFam" id="3.40.1210.10:FF:000001">
    <property type="entry name" value="5'/3'-nucleotidase SurE"/>
    <property type="match status" value="1"/>
</dbReference>
<dbReference type="Gene3D" id="3.40.1210.10">
    <property type="entry name" value="Survival protein SurE-like phosphatase/nucleotidase"/>
    <property type="match status" value="1"/>
</dbReference>
<dbReference type="HAMAP" id="MF_00060">
    <property type="entry name" value="SurE"/>
    <property type="match status" value="1"/>
</dbReference>
<dbReference type="InterPro" id="IPR030048">
    <property type="entry name" value="SurE"/>
</dbReference>
<dbReference type="InterPro" id="IPR002828">
    <property type="entry name" value="SurE-like_Pase/nucleotidase"/>
</dbReference>
<dbReference type="InterPro" id="IPR036523">
    <property type="entry name" value="SurE-like_sf"/>
</dbReference>
<dbReference type="NCBIfam" id="NF001489">
    <property type="entry name" value="PRK00346.1-3"/>
    <property type="match status" value="1"/>
</dbReference>
<dbReference type="NCBIfam" id="NF001490">
    <property type="entry name" value="PRK00346.1-4"/>
    <property type="match status" value="1"/>
</dbReference>
<dbReference type="NCBIfam" id="TIGR00087">
    <property type="entry name" value="surE"/>
    <property type="match status" value="1"/>
</dbReference>
<dbReference type="PANTHER" id="PTHR30457">
    <property type="entry name" value="5'-NUCLEOTIDASE SURE"/>
    <property type="match status" value="1"/>
</dbReference>
<dbReference type="PANTHER" id="PTHR30457:SF12">
    <property type="entry name" value="5'_3'-NUCLEOTIDASE SURE"/>
    <property type="match status" value="1"/>
</dbReference>
<dbReference type="Pfam" id="PF01975">
    <property type="entry name" value="SurE"/>
    <property type="match status" value="1"/>
</dbReference>
<dbReference type="SUPFAM" id="SSF64167">
    <property type="entry name" value="SurE-like"/>
    <property type="match status" value="1"/>
</dbReference>
<comment type="function">
    <text evidence="1">Nucleotidase that shows phosphatase activity on nucleoside 5'-monophosphates.</text>
</comment>
<comment type="catalytic activity">
    <reaction evidence="1">
        <text>a ribonucleoside 5'-phosphate + H2O = a ribonucleoside + phosphate</text>
        <dbReference type="Rhea" id="RHEA:12484"/>
        <dbReference type="ChEBI" id="CHEBI:15377"/>
        <dbReference type="ChEBI" id="CHEBI:18254"/>
        <dbReference type="ChEBI" id="CHEBI:43474"/>
        <dbReference type="ChEBI" id="CHEBI:58043"/>
        <dbReference type="EC" id="3.1.3.5"/>
    </reaction>
</comment>
<comment type="cofactor">
    <cofactor evidence="1">
        <name>a divalent metal cation</name>
        <dbReference type="ChEBI" id="CHEBI:60240"/>
    </cofactor>
    <text evidence="1">Binds 1 divalent metal cation per subunit.</text>
</comment>
<comment type="subcellular location">
    <subcellularLocation>
        <location evidence="1">Cytoplasm</location>
    </subcellularLocation>
</comment>
<comment type="similarity">
    <text evidence="1">Belongs to the SurE nucleotidase family.</text>
</comment>
<feature type="chain" id="PRO_0000235637" description="5'-nucleotidase SurE">
    <location>
        <begin position="1"/>
        <end position="254"/>
    </location>
</feature>
<feature type="binding site" evidence="1">
    <location>
        <position position="8"/>
    </location>
    <ligand>
        <name>a divalent metal cation</name>
        <dbReference type="ChEBI" id="CHEBI:60240"/>
    </ligand>
</feature>
<feature type="binding site" evidence="1">
    <location>
        <position position="9"/>
    </location>
    <ligand>
        <name>a divalent metal cation</name>
        <dbReference type="ChEBI" id="CHEBI:60240"/>
    </ligand>
</feature>
<feature type="binding site" evidence="1">
    <location>
        <position position="39"/>
    </location>
    <ligand>
        <name>a divalent metal cation</name>
        <dbReference type="ChEBI" id="CHEBI:60240"/>
    </ligand>
</feature>
<feature type="binding site" evidence="1">
    <location>
        <position position="91"/>
    </location>
    <ligand>
        <name>a divalent metal cation</name>
        <dbReference type="ChEBI" id="CHEBI:60240"/>
    </ligand>
</feature>
<gene>
    <name evidence="1" type="primary">surE</name>
    <name type="ordered locus">PSHAa0687</name>
</gene>
<sequence length="254" mass="26770">MKILLSNDDGVGAKGIAVLYQALMQIAEVTLVAPDRNCSGASNSLTLLNPLRATKLENGFISVNGTPTDCVHLGVNQLVDEMPDLVVAGINHGANLGDDTLYSGTVAAATEGRHLGLPAIAVSLCSHHGEHFETAAAVTISIIKGLASHPLPKDQIININVPDIPLSELKGVQVTRLGARHKAETMTKQTDPWGRDIYWYGSLGTESDAGEGTDFHAINNGYASVTPLSVDMTANESIKAVGEWLADLEINRAG</sequence>